<protein>
    <recommendedName>
        <fullName evidence="1">Small ribosomal subunit protein uS2c</fullName>
    </recommendedName>
    <alternativeName>
        <fullName>30S ribosomal protein S2, chloroplastic</fullName>
    </alternativeName>
</protein>
<name>RR2_EMIHU</name>
<proteinExistence type="inferred from homology"/>
<accession>Q4G3A3</accession>
<reference key="1">
    <citation type="journal article" date="2006" name="J. Mol. Evol.">
        <title>Rate variation as a function of gene origin in plastid-derived genes of peridinin-containing dinoflagellates.</title>
        <authorList>
            <person name="Bachvaroff T.R."/>
            <person name="Sanchez-Puerta M.V."/>
            <person name="Delwiche C.F."/>
        </authorList>
    </citation>
    <scope>NUCLEOTIDE SEQUENCE [GENOMIC DNA]</scope>
    <source>
        <strain>CCMP373 / CSIRO-CS-57 / BT6</strain>
    </source>
</reference>
<reference key="2">
    <citation type="journal article" date="2005" name="DNA Res.">
        <title>The complete plastid genome sequence of the haptophyte Emiliania huxleyi: a comparison to other plastid genomes.</title>
        <authorList>
            <person name="Sanchez-Puerta M.V."/>
            <person name="Bachvaroff T.R."/>
            <person name="Delwiche C.F."/>
        </authorList>
    </citation>
    <scope>NUCLEOTIDE SEQUENCE [LARGE SCALE GENOMIC DNA]</scope>
    <source>
        <strain>CCMP373 / CSIRO-CS-57 / BT6</strain>
    </source>
</reference>
<evidence type="ECO:0000305" key="1"/>
<organism>
    <name type="scientific">Emiliania huxleyi</name>
    <name type="common">Coccolithophore</name>
    <name type="synonym">Pontosphaera huxleyi</name>
    <dbReference type="NCBI Taxonomy" id="2903"/>
    <lineage>
        <taxon>Eukaryota</taxon>
        <taxon>Haptista</taxon>
        <taxon>Haptophyta</taxon>
        <taxon>Prymnesiophyceae</taxon>
        <taxon>Isochrysidales</taxon>
        <taxon>Noelaerhabdaceae</taxon>
        <taxon>Emiliania</taxon>
    </lineage>
</organism>
<comment type="subcellular location">
    <subcellularLocation>
        <location>Plastid</location>
        <location>Chloroplast</location>
    </subcellularLocation>
</comment>
<comment type="similarity">
    <text evidence="1">Belongs to the universal ribosomal protein uS2 family.</text>
</comment>
<geneLocation type="chloroplast"/>
<dbReference type="EMBL" id="AY704574">
    <property type="protein sequence ID" value="AAU81913.1"/>
    <property type="molecule type" value="Genomic_DNA"/>
</dbReference>
<dbReference type="EMBL" id="AY741371">
    <property type="protein sequence ID" value="AAX13863.1"/>
    <property type="molecule type" value="Genomic_DNA"/>
</dbReference>
<dbReference type="RefSeq" id="YP_277364.1">
    <property type="nucleotide sequence ID" value="NC_007288.1"/>
</dbReference>
<dbReference type="SMR" id="Q4G3A3"/>
<dbReference type="STRING" id="2903.Q4G3A3"/>
<dbReference type="GeneID" id="3562440"/>
<dbReference type="GO" id="GO:0009507">
    <property type="term" value="C:chloroplast"/>
    <property type="evidence" value="ECO:0007669"/>
    <property type="project" value="UniProtKB-SubCell"/>
</dbReference>
<dbReference type="GO" id="GO:0005763">
    <property type="term" value="C:mitochondrial small ribosomal subunit"/>
    <property type="evidence" value="ECO:0007669"/>
    <property type="project" value="TreeGrafter"/>
</dbReference>
<dbReference type="GO" id="GO:0003735">
    <property type="term" value="F:structural constituent of ribosome"/>
    <property type="evidence" value="ECO:0007669"/>
    <property type="project" value="InterPro"/>
</dbReference>
<dbReference type="GO" id="GO:0006412">
    <property type="term" value="P:translation"/>
    <property type="evidence" value="ECO:0007669"/>
    <property type="project" value="UniProtKB-UniRule"/>
</dbReference>
<dbReference type="CDD" id="cd01425">
    <property type="entry name" value="RPS2"/>
    <property type="match status" value="1"/>
</dbReference>
<dbReference type="FunFam" id="1.10.287.610:FF:000001">
    <property type="entry name" value="30S ribosomal protein S2"/>
    <property type="match status" value="1"/>
</dbReference>
<dbReference type="Gene3D" id="3.40.50.10490">
    <property type="entry name" value="Glucose-6-phosphate isomerase like protein, domain 1"/>
    <property type="match status" value="1"/>
</dbReference>
<dbReference type="Gene3D" id="1.10.287.610">
    <property type="entry name" value="Helix hairpin bin"/>
    <property type="match status" value="1"/>
</dbReference>
<dbReference type="HAMAP" id="MF_00291_B">
    <property type="entry name" value="Ribosomal_uS2_B"/>
    <property type="match status" value="1"/>
</dbReference>
<dbReference type="InterPro" id="IPR001865">
    <property type="entry name" value="Ribosomal_uS2"/>
</dbReference>
<dbReference type="InterPro" id="IPR005706">
    <property type="entry name" value="Ribosomal_uS2_bac/mit/plastid"/>
</dbReference>
<dbReference type="InterPro" id="IPR018130">
    <property type="entry name" value="Ribosomal_uS2_CS"/>
</dbReference>
<dbReference type="InterPro" id="IPR023591">
    <property type="entry name" value="Ribosomal_uS2_flav_dom_sf"/>
</dbReference>
<dbReference type="NCBIfam" id="TIGR01011">
    <property type="entry name" value="rpsB_bact"/>
    <property type="match status" value="1"/>
</dbReference>
<dbReference type="PANTHER" id="PTHR12534">
    <property type="entry name" value="30S RIBOSOMAL PROTEIN S2 PROKARYOTIC AND ORGANELLAR"/>
    <property type="match status" value="1"/>
</dbReference>
<dbReference type="PANTHER" id="PTHR12534:SF0">
    <property type="entry name" value="SMALL RIBOSOMAL SUBUNIT PROTEIN US2M"/>
    <property type="match status" value="1"/>
</dbReference>
<dbReference type="Pfam" id="PF00318">
    <property type="entry name" value="Ribosomal_S2"/>
    <property type="match status" value="1"/>
</dbReference>
<dbReference type="PRINTS" id="PR00395">
    <property type="entry name" value="RIBOSOMALS2"/>
</dbReference>
<dbReference type="SUPFAM" id="SSF52313">
    <property type="entry name" value="Ribosomal protein S2"/>
    <property type="match status" value="1"/>
</dbReference>
<dbReference type="PROSITE" id="PS00962">
    <property type="entry name" value="RIBOSOMAL_S2_1"/>
    <property type="match status" value="1"/>
</dbReference>
<dbReference type="PROSITE" id="PS00963">
    <property type="entry name" value="RIBOSOMAL_S2_2"/>
    <property type="match status" value="1"/>
</dbReference>
<sequence length="229" mass="25832">MTVVTLGELLDAGVHFGHQASRWNPKMFPYIYAERNGIHVIDLVQTARLLTHAYEFVQKASQEKKSFLFVGTKRQAASIIAEEAQRCGGHYVNNRWLGGILTNWSTVQKRVEYLKELDAKEEDGTLDRLPKKEAAFLRREQEKLSHNLRGLINMTQIPDIVILVDPKRETTALLECRKLGIPIISILDTNCDPNLVDIPIPANDDAVRSVKLIISTLADGILEGKQSYQ</sequence>
<feature type="chain" id="PRO_0000276981" description="Small ribosomal subunit protein uS2c">
    <location>
        <begin position="1"/>
        <end position="229"/>
    </location>
</feature>
<keyword id="KW-0150">Chloroplast</keyword>
<keyword id="KW-0934">Plastid</keyword>
<keyword id="KW-0687">Ribonucleoprotein</keyword>
<keyword id="KW-0689">Ribosomal protein</keyword>
<gene>
    <name type="primary">rps2</name>
</gene>